<proteinExistence type="evidence at transcript level"/>
<comment type="function">
    <text evidence="4 5">FAD-dependent monooxygenase; part of the gene cluster that mediates the biosynthesis of fusarubins, highly pigmented naphthoquinones responsible for the coloration of the fruiting bodies (PubMed:22492438, PubMed:23825955). The non-reducing polyketide synthase FSR1 is responsible for the condensation of seven acetyl-CoA units to yield a haptaketide (PubMed:22492438). After rings A and B are formed by aldol-type cyclization, the PKS-derived product is released as 6-O-demethylfusarubinaldehyde (PubMed:22492438). Then, two hydroxyl groups at C-5 and C-10 are incorporated by FSR3, and simultaneously hydroxyl groups at C-6 and C-8 are methylated by FSR2 (PubMed:22492438). The aldehyde is, on the one hand, reduced by FSR3 to 8-O-methylfusarubin alcohol, which equilibrates mainly with 8-O-methylfusarubin and only small amounts of 8-O-methylnectriafurone (PubMed:22492438). On the other hand, the aldehyde can be oxidized to form 8-O-methylfusarubinic acid, a reaction driven by FSR3 equilibrating with 8-O-methylfusarubinlactone, finally resulting in 8-O-methylanhydrofusarubinlactol after a further reduction step and loss of water (PubMed:22492438). 8-O-Methylfusarubinic acid can also undergo decarboxylation, resulting in 8-O-methyl-13-hydroxynorjavanicin after another hydroxylation step at C-13 (PubMed:22492438). Both steps are most likely also accomplished by FSR3 (PubMed:22492438). No enzymatic function has been determined so far for either FSR4 and FSR5 (PubMed:22492438). Their deletion does not alter the product spectrum, but the possibility that they catalyze specific enzymatic steps during perithecium development cannot be ruled out (PubMed:22492438). FSR4 might possess a regulatory function in the biosynthesis of fusarubins (PubMed:22492438).</text>
</comment>
<comment type="cofactor">
    <cofactor evidence="7">
        <name>FAD</name>
        <dbReference type="ChEBI" id="CHEBI:57692"/>
    </cofactor>
</comment>
<comment type="pathway">
    <text evidence="4">Polyketide biosynthesis.</text>
</comment>
<comment type="induction">
    <text evidence="4">Expression is repressed under acidic conditions, while the expression is induced under alkaline conditions (PubMed:22492438). Expression is induced in presence of sodium nitrate, and repressed by glutamine (PubMed:22492438).</text>
</comment>
<comment type="disruption phenotype">
    <text evidence="4">Leads to an alteration in the product spectrum, with an accumulation of fusarubinaldehyde (PubMed:22492438).</text>
</comment>
<comment type="similarity">
    <text evidence="7">Belongs to the paxM FAD-dependent monooxygenase family.</text>
</comment>
<protein>
    <recommendedName>
        <fullName evidence="6">FAD-dependent monooxygenase fsr3</fullName>
        <ecNumber evidence="4">1.-.-.-</ecNumber>
    </recommendedName>
    <alternativeName>
        <fullName evidence="6">Fusarubin biosynthesis cluster protein 3</fullName>
    </alternativeName>
</protein>
<organism>
    <name type="scientific">Gibberella fujikuroi (strain CBS 195.34 / IMI 58289 / NRRL A-6831)</name>
    <name type="common">Bakanae and foot rot disease fungus</name>
    <name type="synonym">Fusarium fujikuroi</name>
    <dbReference type="NCBI Taxonomy" id="1279085"/>
    <lineage>
        <taxon>Eukaryota</taxon>
        <taxon>Fungi</taxon>
        <taxon>Dikarya</taxon>
        <taxon>Ascomycota</taxon>
        <taxon>Pezizomycotina</taxon>
        <taxon>Sordariomycetes</taxon>
        <taxon>Hypocreomycetidae</taxon>
        <taxon>Hypocreales</taxon>
        <taxon>Nectriaceae</taxon>
        <taxon>Fusarium</taxon>
        <taxon>Fusarium fujikuroi species complex</taxon>
    </lineage>
</organism>
<sequence>MKNTQTNGTHPIIDKKPNGTLNGDHQEYPTFSQEKLDDSIKRGIDLQVFRYPSTGINVLIAGAGLGGITCALECWRKGHNVRIIDRSPSPVWTGDNVQIQPSAILLLRHWPDMGYEIEENQYDVDMSYYRQTGERIWGPAPPMFNDPEHLPGRRGFPSVNAHSRIKLYRAFLKQAERVGIYVEWGCKVVEYWEDVEGHAGGVVLENGEKRTADIVVAADGLRTKSMTIVPGMPDQLTTSGKAIYRAGYPVEHALKDPTVREMWNFKPEDKPIWQFWLGNGSHNMMCLTHDLAFWSFIHSHAESASESWIPDIDPAEVITEMEKNDAVHPAIAALIRTAPKGSVVNWQLKFRDPHEQWTSPGGHVVQLGDAAHAFLPTSGNGATQAIEDGVTLATCLQLAGKAQAANATKVYNKLRFQRVSCGQKMGFVNQQLKQHTDWDAIMKNPALIRSRYPKWVWSHDPEAYAYEKFAEALTHVVSGGRVPLVNTNFPKGHKYRHWTMKEVQEQIKAGQKLEDLQDGDWS</sequence>
<name>FSR3_GIBF5</name>
<keyword id="KW-0274">FAD</keyword>
<keyword id="KW-0285">Flavoprotein</keyword>
<keyword id="KW-0503">Monooxygenase</keyword>
<keyword id="KW-0560">Oxidoreductase</keyword>
<keyword id="KW-1185">Reference proteome</keyword>
<evidence type="ECO:0000250" key="1">
    <source>
        <dbReference type="UniProtKB" id="B8M9J8"/>
    </source>
</evidence>
<evidence type="ECO:0000250" key="2">
    <source>
        <dbReference type="UniProtKB" id="L0E4H0"/>
    </source>
</evidence>
<evidence type="ECO:0000256" key="3">
    <source>
        <dbReference type="SAM" id="MobiDB-lite"/>
    </source>
</evidence>
<evidence type="ECO:0000269" key="4">
    <source>
    </source>
</evidence>
<evidence type="ECO:0000269" key="5">
    <source>
    </source>
</evidence>
<evidence type="ECO:0000303" key="6">
    <source>
    </source>
</evidence>
<evidence type="ECO:0000305" key="7"/>
<reference key="1">
    <citation type="journal article" date="2012" name="Appl. Environ. Microbiol.">
        <title>Biosynthesis of fusarubins accounts for pigmentation of Fusarium fujikuroi perithecia.</title>
        <authorList>
            <person name="Studt L."/>
            <person name="Wiemann P."/>
            <person name="Kleigrewe K."/>
            <person name="Humpf H.U."/>
            <person name="Tudzynski B."/>
        </authorList>
    </citation>
    <scope>NUCLEOTIDE SEQUENCE [GENOMIC DNA]</scope>
    <scope>FUNCTION</scope>
    <scope>INDUCTION</scope>
    <scope>DISRUPTION PHENOTYPE</scope>
    <scope>PATHWAY</scope>
    <source>
        <strain>CBS 195.34 / IMI 58289 / NRRL A-6831</strain>
    </source>
</reference>
<reference key="2">
    <citation type="journal article" date="2013" name="PLoS Pathog.">
        <title>Deciphering the cryptic genome: genome-wide analyses of the rice pathogen Fusarium fujikuroi reveal complex regulation of secondary metabolism and novel metabolites.</title>
        <authorList>
            <person name="Wiemann P."/>
            <person name="Sieber C.M.K."/>
            <person name="von Bargen K.W."/>
            <person name="Studt L."/>
            <person name="Niehaus E.-M."/>
            <person name="Espino J.J."/>
            <person name="Huss K."/>
            <person name="Michielse C.B."/>
            <person name="Albermann S."/>
            <person name="Wagner D."/>
            <person name="Bergner S.V."/>
            <person name="Connolly L.R."/>
            <person name="Fischer A."/>
            <person name="Reuter G."/>
            <person name="Kleigrewe K."/>
            <person name="Bald T."/>
            <person name="Wingfield B.D."/>
            <person name="Ophir R."/>
            <person name="Freeman S."/>
            <person name="Hippler M."/>
            <person name="Smith K.M."/>
            <person name="Brown D.W."/>
            <person name="Proctor R.H."/>
            <person name="Muensterkoetter M."/>
            <person name="Freitag M."/>
            <person name="Humpf H.-U."/>
            <person name="Gueldener U."/>
            <person name="Tudzynski B."/>
        </authorList>
    </citation>
    <scope>NUCLEOTIDE SEQUENCE [LARGE SCALE GENOMIC DNA]</scope>
    <scope>FUNCTION</scope>
    <source>
        <strain>CBS 195.34 / IMI 58289 / NRRL A-6831</strain>
    </source>
</reference>
<dbReference type="EC" id="1.-.-.-" evidence="4"/>
<dbReference type="EMBL" id="HE613440">
    <property type="protein sequence ID" value="CCE67072.1"/>
    <property type="molecule type" value="Genomic_DNA"/>
</dbReference>
<dbReference type="EMBL" id="HF679024">
    <property type="protein sequence ID" value="CCT64760.1"/>
    <property type="molecule type" value="Genomic_DNA"/>
</dbReference>
<dbReference type="RefSeq" id="XP_023426841.1">
    <property type="nucleotide sequence ID" value="XM_023572781.1"/>
</dbReference>
<dbReference type="SMR" id="S0DQN6"/>
<dbReference type="STRING" id="1279085.S0DQN6"/>
<dbReference type="GeneID" id="35397467"/>
<dbReference type="VEuPathDB" id="FungiDB:FFUJ_03986"/>
<dbReference type="Proteomes" id="UP000016800">
    <property type="component" value="Chromosome 2"/>
</dbReference>
<dbReference type="GO" id="GO:0071949">
    <property type="term" value="F:FAD binding"/>
    <property type="evidence" value="ECO:0007669"/>
    <property type="project" value="InterPro"/>
</dbReference>
<dbReference type="GO" id="GO:0004497">
    <property type="term" value="F:monooxygenase activity"/>
    <property type="evidence" value="ECO:0007669"/>
    <property type="project" value="UniProtKB-KW"/>
</dbReference>
<dbReference type="Gene3D" id="3.50.50.60">
    <property type="entry name" value="FAD/NAD(P)-binding domain"/>
    <property type="match status" value="1"/>
</dbReference>
<dbReference type="InterPro" id="IPR002938">
    <property type="entry name" value="FAD-bd"/>
</dbReference>
<dbReference type="InterPro" id="IPR050493">
    <property type="entry name" value="FAD-dep_Monooxygenase_BioMet"/>
</dbReference>
<dbReference type="InterPro" id="IPR036188">
    <property type="entry name" value="FAD/NAD-bd_sf"/>
</dbReference>
<dbReference type="PANTHER" id="PTHR13789:SF315">
    <property type="entry name" value="FAD-DEPENDENT MONOOXYGENASE MDPD"/>
    <property type="match status" value="1"/>
</dbReference>
<dbReference type="PANTHER" id="PTHR13789">
    <property type="entry name" value="MONOOXYGENASE"/>
    <property type="match status" value="1"/>
</dbReference>
<dbReference type="Pfam" id="PF01494">
    <property type="entry name" value="FAD_binding_3"/>
    <property type="match status" value="1"/>
</dbReference>
<dbReference type="PRINTS" id="PR00420">
    <property type="entry name" value="RNGMNOXGNASE"/>
</dbReference>
<dbReference type="SUPFAM" id="SSF51905">
    <property type="entry name" value="FAD/NAD(P)-binding domain"/>
    <property type="match status" value="1"/>
</dbReference>
<feature type="chain" id="PRO_0000442026" description="FAD-dependent monooxygenase fsr3">
    <location>
        <begin position="1"/>
        <end position="522"/>
    </location>
</feature>
<feature type="region of interest" description="Disordered" evidence="3">
    <location>
        <begin position="1"/>
        <end position="27"/>
    </location>
</feature>
<feature type="active site" evidence="2">
    <location>
        <position position="245"/>
    </location>
</feature>
<feature type="binding site" evidence="1">
    <location>
        <position position="164"/>
    </location>
    <ligand>
        <name>FAD</name>
        <dbReference type="ChEBI" id="CHEBI:57692"/>
    </ligand>
</feature>
<feature type="binding site" evidence="1">
    <location>
        <position position="369"/>
    </location>
    <ligand>
        <name>FAD</name>
        <dbReference type="ChEBI" id="CHEBI:57692"/>
    </ligand>
</feature>
<feature type="binding site" evidence="1">
    <location>
        <position position="382"/>
    </location>
    <ligand>
        <name>FAD</name>
        <dbReference type="ChEBI" id="CHEBI:57692"/>
    </ligand>
</feature>
<gene>
    <name evidence="6" type="primary">fsr3</name>
    <name type="ORF">FFUJ_03986</name>
</gene>
<accession>S0DQN6</accession>
<accession>G8C421</accession>